<organism>
    <name type="scientific">Xanthomonas campestris pv. campestris (strain 8004)</name>
    <dbReference type="NCBI Taxonomy" id="314565"/>
    <lineage>
        <taxon>Bacteria</taxon>
        <taxon>Pseudomonadati</taxon>
        <taxon>Pseudomonadota</taxon>
        <taxon>Gammaproteobacteria</taxon>
        <taxon>Lysobacterales</taxon>
        <taxon>Lysobacteraceae</taxon>
        <taxon>Xanthomonas</taxon>
    </lineage>
</organism>
<gene>
    <name evidence="1" type="primary">metG</name>
    <name type="ordered locus">XC_2900</name>
</gene>
<dbReference type="EC" id="6.1.1.10" evidence="1"/>
<dbReference type="EMBL" id="CP000050">
    <property type="protein sequence ID" value="AAY49948.1"/>
    <property type="molecule type" value="Genomic_DNA"/>
</dbReference>
<dbReference type="RefSeq" id="WP_011036531.1">
    <property type="nucleotide sequence ID" value="NZ_CP155948.1"/>
</dbReference>
<dbReference type="SMR" id="Q4USM5"/>
<dbReference type="KEGG" id="xcb:XC_2900"/>
<dbReference type="HOGENOM" id="CLU_009710_7_0_6"/>
<dbReference type="Proteomes" id="UP000000420">
    <property type="component" value="Chromosome"/>
</dbReference>
<dbReference type="GO" id="GO:0005829">
    <property type="term" value="C:cytosol"/>
    <property type="evidence" value="ECO:0007669"/>
    <property type="project" value="TreeGrafter"/>
</dbReference>
<dbReference type="GO" id="GO:0005524">
    <property type="term" value="F:ATP binding"/>
    <property type="evidence" value="ECO:0007669"/>
    <property type="project" value="UniProtKB-UniRule"/>
</dbReference>
<dbReference type="GO" id="GO:0046872">
    <property type="term" value="F:metal ion binding"/>
    <property type="evidence" value="ECO:0007669"/>
    <property type="project" value="UniProtKB-KW"/>
</dbReference>
<dbReference type="GO" id="GO:0004825">
    <property type="term" value="F:methionine-tRNA ligase activity"/>
    <property type="evidence" value="ECO:0007669"/>
    <property type="project" value="UniProtKB-UniRule"/>
</dbReference>
<dbReference type="GO" id="GO:0000049">
    <property type="term" value="F:tRNA binding"/>
    <property type="evidence" value="ECO:0007669"/>
    <property type="project" value="UniProtKB-KW"/>
</dbReference>
<dbReference type="GO" id="GO:0006431">
    <property type="term" value="P:methionyl-tRNA aminoacylation"/>
    <property type="evidence" value="ECO:0007669"/>
    <property type="project" value="UniProtKB-UniRule"/>
</dbReference>
<dbReference type="CDD" id="cd07957">
    <property type="entry name" value="Anticodon_Ia_Met"/>
    <property type="match status" value="1"/>
</dbReference>
<dbReference type="CDD" id="cd00814">
    <property type="entry name" value="MetRS_core"/>
    <property type="match status" value="1"/>
</dbReference>
<dbReference type="CDD" id="cd02800">
    <property type="entry name" value="tRNA_bind_EcMetRS_like"/>
    <property type="match status" value="1"/>
</dbReference>
<dbReference type="FunFam" id="1.10.730.10:FF:000005">
    <property type="entry name" value="Methionine--tRNA ligase"/>
    <property type="match status" value="1"/>
</dbReference>
<dbReference type="FunFam" id="2.20.28.20:FF:000001">
    <property type="entry name" value="Methionine--tRNA ligase"/>
    <property type="match status" value="1"/>
</dbReference>
<dbReference type="FunFam" id="2.40.50.140:FF:000042">
    <property type="entry name" value="Methionine--tRNA ligase"/>
    <property type="match status" value="1"/>
</dbReference>
<dbReference type="Gene3D" id="3.40.50.620">
    <property type="entry name" value="HUPs"/>
    <property type="match status" value="1"/>
</dbReference>
<dbReference type="Gene3D" id="1.10.730.10">
    <property type="entry name" value="Isoleucyl-tRNA Synthetase, Domain 1"/>
    <property type="match status" value="1"/>
</dbReference>
<dbReference type="Gene3D" id="2.20.28.20">
    <property type="entry name" value="Methionyl-tRNA synthetase, Zn-domain"/>
    <property type="match status" value="1"/>
</dbReference>
<dbReference type="Gene3D" id="2.40.50.140">
    <property type="entry name" value="Nucleic acid-binding proteins"/>
    <property type="match status" value="1"/>
</dbReference>
<dbReference type="HAMAP" id="MF_00098">
    <property type="entry name" value="Met_tRNA_synth_type1"/>
    <property type="match status" value="1"/>
</dbReference>
<dbReference type="InterPro" id="IPR001412">
    <property type="entry name" value="aa-tRNA-synth_I_CS"/>
</dbReference>
<dbReference type="InterPro" id="IPR041872">
    <property type="entry name" value="Anticodon_Met"/>
</dbReference>
<dbReference type="InterPro" id="IPR004495">
    <property type="entry name" value="Met-tRNA-synth_bsu_C"/>
</dbReference>
<dbReference type="InterPro" id="IPR023458">
    <property type="entry name" value="Met-tRNA_ligase_1"/>
</dbReference>
<dbReference type="InterPro" id="IPR014758">
    <property type="entry name" value="Met-tRNA_synth"/>
</dbReference>
<dbReference type="InterPro" id="IPR015413">
    <property type="entry name" value="Methionyl/Leucyl_tRNA_Synth"/>
</dbReference>
<dbReference type="InterPro" id="IPR033911">
    <property type="entry name" value="MetRS_core"/>
</dbReference>
<dbReference type="InterPro" id="IPR029038">
    <property type="entry name" value="MetRS_Zn"/>
</dbReference>
<dbReference type="InterPro" id="IPR012340">
    <property type="entry name" value="NA-bd_OB-fold"/>
</dbReference>
<dbReference type="InterPro" id="IPR014729">
    <property type="entry name" value="Rossmann-like_a/b/a_fold"/>
</dbReference>
<dbReference type="InterPro" id="IPR002547">
    <property type="entry name" value="tRNA-bd_dom"/>
</dbReference>
<dbReference type="InterPro" id="IPR009080">
    <property type="entry name" value="tRNAsynth_Ia_anticodon-bd"/>
</dbReference>
<dbReference type="NCBIfam" id="TIGR00398">
    <property type="entry name" value="metG"/>
    <property type="match status" value="1"/>
</dbReference>
<dbReference type="NCBIfam" id="TIGR00399">
    <property type="entry name" value="metG_C_term"/>
    <property type="match status" value="1"/>
</dbReference>
<dbReference type="NCBIfam" id="NF001100">
    <property type="entry name" value="PRK00133.1"/>
    <property type="match status" value="1"/>
</dbReference>
<dbReference type="PANTHER" id="PTHR45765">
    <property type="entry name" value="METHIONINE--TRNA LIGASE"/>
    <property type="match status" value="1"/>
</dbReference>
<dbReference type="PANTHER" id="PTHR45765:SF1">
    <property type="entry name" value="METHIONINE--TRNA LIGASE, CYTOPLASMIC"/>
    <property type="match status" value="1"/>
</dbReference>
<dbReference type="Pfam" id="PF19303">
    <property type="entry name" value="Anticodon_3"/>
    <property type="match status" value="1"/>
</dbReference>
<dbReference type="Pfam" id="PF09334">
    <property type="entry name" value="tRNA-synt_1g"/>
    <property type="match status" value="1"/>
</dbReference>
<dbReference type="Pfam" id="PF01588">
    <property type="entry name" value="tRNA_bind"/>
    <property type="match status" value="1"/>
</dbReference>
<dbReference type="PRINTS" id="PR01041">
    <property type="entry name" value="TRNASYNTHMET"/>
</dbReference>
<dbReference type="SUPFAM" id="SSF47323">
    <property type="entry name" value="Anticodon-binding domain of a subclass of class I aminoacyl-tRNA synthetases"/>
    <property type="match status" value="1"/>
</dbReference>
<dbReference type="SUPFAM" id="SSF57770">
    <property type="entry name" value="Methionyl-tRNA synthetase (MetRS), Zn-domain"/>
    <property type="match status" value="1"/>
</dbReference>
<dbReference type="SUPFAM" id="SSF50249">
    <property type="entry name" value="Nucleic acid-binding proteins"/>
    <property type="match status" value="1"/>
</dbReference>
<dbReference type="SUPFAM" id="SSF52374">
    <property type="entry name" value="Nucleotidylyl transferase"/>
    <property type="match status" value="1"/>
</dbReference>
<dbReference type="PROSITE" id="PS00178">
    <property type="entry name" value="AA_TRNA_LIGASE_I"/>
    <property type="match status" value="1"/>
</dbReference>
<dbReference type="PROSITE" id="PS50886">
    <property type="entry name" value="TRBD"/>
    <property type="match status" value="1"/>
</dbReference>
<feature type="chain" id="PRO_0000331927" description="Methionine--tRNA ligase">
    <location>
        <begin position="1"/>
        <end position="696"/>
    </location>
</feature>
<feature type="domain" description="tRNA-binding" evidence="1">
    <location>
        <begin position="593"/>
        <end position="696"/>
    </location>
</feature>
<feature type="short sequence motif" description="'HIGH' region">
    <location>
        <begin position="12"/>
        <end position="22"/>
    </location>
</feature>
<feature type="short sequence motif" description="'KMSKS' region">
    <location>
        <begin position="330"/>
        <end position="334"/>
    </location>
</feature>
<feature type="binding site" evidence="1">
    <location>
        <position position="143"/>
    </location>
    <ligand>
        <name>Zn(2+)</name>
        <dbReference type="ChEBI" id="CHEBI:29105"/>
    </ligand>
</feature>
<feature type="binding site" evidence="1">
    <location>
        <position position="146"/>
    </location>
    <ligand>
        <name>Zn(2+)</name>
        <dbReference type="ChEBI" id="CHEBI:29105"/>
    </ligand>
</feature>
<feature type="binding site" evidence="1">
    <location>
        <position position="156"/>
    </location>
    <ligand>
        <name>Zn(2+)</name>
        <dbReference type="ChEBI" id="CHEBI:29105"/>
    </ligand>
</feature>
<feature type="binding site" evidence="1">
    <location>
        <position position="159"/>
    </location>
    <ligand>
        <name>Zn(2+)</name>
        <dbReference type="ChEBI" id="CHEBI:29105"/>
    </ligand>
</feature>
<feature type="binding site" evidence="1">
    <location>
        <position position="333"/>
    </location>
    <ligand>
        <name>ATP</name>
        <dbReference type="ChEBI" id="CHEBI:30616"/>
    </ligand>
</feature>
<protein>
    <recommendedName>
        <fullName evidence="1">Methionine--tRNA ligase</fullName>
        <ecNumber evidence="1">6.1.1.10</ecNumber>
    </recommendedName>
    <alternativeName>
        <fullName evidence="1">Methionyl-tRNA synthetase</fullName>
        <shortName evidence="1">MetRS</shortName>
    </alternativeName>
</protein>
<evidence type="ECO:0000255" key="1">
    <source>
        <dbReference type="HAMAP-Rule" id="MF_00098"/>
    </source>
</evidence>
<sequence>MTRTALVTTALPYANGPLHLGHLVGYIQADIWVRARRLRGDKTWFVCADDTHGTPIMLAAEKAGVTPEAFIANIQASHERDFAAFGVTFDHYDSTNSPVNRELTEAFYTKLEAAGHISRRSVAQFYDPAKGMFLPDRYIKGICPNCGSADQYGDNCEVCGATYAPTELKEPKSVISGATPELRDSEHFFFEVGHFDGFLREWLDGDVALPGVKAKLKEWLDAEGGLRAWDISRDAPYFGFQIPGQPGKYFYVWLDAPIGYLCSFKTLCAQMGEDFQAHLAAGTQTELHHFIGKDIVNFHGLFWPAVLHGTGHRAPTRLHVNGYLMVDGAKMSKSRGTFVMARTFLDVGLEPEALRYYFAAKSSGGVDDLDLNLGDFVARVNADLVGKFVNLASRCAGFIGKRFDGKLADALPDPAQYARFVEALAPIREAYERNDPASAIRQTMALADEANKYIDDTKPWVIAKQEGADAQLQSVCTQGLNLFRLLVAALKPILPRTAAEAEAFLSAPMTSWEDVSRPLTCHVIQPYTALFTRIDPKLIDAMTDASKDTMAAPAAPAATTASAEKVAKIDAKAATPANPPASVANPGLIGMDDFAKLDLRIGKVLVCEAVEGSDKLLRFELDAGELGKRQIFSGIRASYGEPETLVGRSVVFIANLAPRKMRFGISEGMILSAGFDGGALALLDADAGAQPGMPVR</sequence>
<reference key="1">
    <citation type="journal article" date="2005" name="Genome Res.">
        <title>Comparative and functional genomic analyses of the pathogenicity of phytopathogen Xanthomonas campestris pv. campestris.</title>
        <authorList>
            <person name="Qian W."/>
            <person name="Jia Y."/>
            <person name="Ren S.-X."/>
            <person name="He Y.-Q."/>
            <person name="Feng J.-X."/>
            <person name="Lu L.-F."/>
            <person name="Sun Q."/>
            <person name="Ying G."/>
            <person name="Tang D.-J."/>
            <person name="Tang H."/>
            <person name="Wu W."/>
            <person name="Hao P."/>
            <person name="Wang L."/>
            <person name="Jiang B.-L."/>
            <person name="Zeng S."/>
            <person name="Gu W.-Y."/>
            <person name="Lu G."/>
            <person name="Rong L."/>
            <person name="Tian Y."/>
            <person name="Yao Z."/>
            <person name="Fu G."/>
            <person name="Chen B."/>
            <person name="Fang R."/>
            <person name="Qiang B."/>
            <person name="Chen Z."/>
            <person name="Zhao G.-P."/>
            <person name="Tang J.-L."/>
            <person name="He C."/>
        </authorList>
    </citation>
    <scope>NUCLEOTIDE SEQUENCE [LARGE SCALE GENOMIC DNA]</scope>
    <source>
        <strain>8004</strain>
    </source>
</reference>
<comment type="function">
    <text evidence="1">Is required not only for elongation of protein synthesis but also for the initiation of all mRNA translation through initiator tRNA(fMet) aminoacylation.</text>
</comment>
<comment type="catalytic activity">
    <reaction evidence="1">
        <text>tRNA(Met) + L-methionine + ATP = L-methionyl-tRNA(Met) + AMP + diphosphate</text>
        <dbReference type="Rhea" id="RHEA:13481"/>
        <dbReference type="Rhea" id="RHEA-COMP:9667"/>
        <dbReference type="Rhea" id="RHEA-COMP:9698"/>
        <dbReference type="ChEBI" id="CHEBI:30616"/>
        <dbReference type="ChEBI" id="CHEBI:33019"/>
        <dbReference type="ChEBI" id="CHEBI:57844"/>
        <dbReference type="ChEBI" id="CHEBI:78442"/>
        <dbReference type="ChEBI" id="CHEBI:78530"/>
        <dbReference type="ChEBI" id="CHEBI:456215"/>
        <dbReference type="EC" id="6.1.1.10"/>
    </reaction>
</comment>
<comment type="cofactor">
    <cofactor evidence="1">
        <name>Zn(2+)</name>
        <dbReference type="ChEBI" id="CHEBI:29105"/>
    </cofactor>
    <text evidence="1">Binds 1 zinc ion per subunit.</text>
</comment>
<comment type="subunit">
    <text evidence="1">Homodimer.</text>
</comment>
<comment type="subcellular location">
    <subcellularLocation>
        <location evidence="1">Cytoplasm</location>
    </subcellularLocation>
</comment>
<comment type="similarity">
    <text evidence="1">Belongs to the class-I aminoacyl-tRNA synthetase family. MetG type 1 subfamily.</text>
</comment>
<keyword id="KW-0030">Aminoacyl-tRNA synthetase</keyword>
<keyword id="KW-0067">ATP-binding</keyword>
<keyword id="KW-0963">Cytoplasm</keyword>
<keyword id="KW-0436">Ligase</keyword>
<keyword id="KW-0479">Metal-binding</keyword>
<keyword id="KW-0547">Nucleotide-binding</keyword>
<keyword id="KW-0648">Protein biosynthesis</keyword>
<keyword id="KW-0694">RNA-binding</keyword>
<keyword id="KW-0820">tRNA-binding</keyword>
<keyword id="KW-0862">Zinc</keyword>
<accession>Q4USM5</accession>
<name>SYM_XANC8</name>
<proteinExistence type="inferred from homology"/>